<organism>
    <name type="scientific">Mannheimia succiniciproducens (strain KCTC 0769BP / MBEL55E)</name>
    <dbReference type="NCBI Taxonomy" id="221988"/>
    <lineage>
        <taxon>Bacteria</taxon>
        <taxon>Pseudomonadati</taxon>
        <taxon>Pseudomonadota</taxon>
        <taxon>Gammaproteobacteria</taxon>
        <taxon>Pasteurellales</taxon>
        <taxon>Pasteurellaceae</taxon>
        <taxon>Basfia</taxon>
    </lineage>
</organism>
<proteinExistence type="inferred from homology"/>
<comment type="function">
    <text evidence="1">Regulates the transcription of the pyrimidine nucleotide (pyr) operon in response to exogenous pyrimidines.</text>
</comment>
<comment type="function">
    <text evidence="1">Also displays a weak uracil phosphoribosyltransferase activity which is not physiologically significant.</text>
</comment>
<comment type="catalytic activity">
    <reaction evidence="1">
        <text>UMP + diphosphate = 5-phospho-alpha-D-ribose 1-diphosphate + uracil</text>
        <dbReference type="Rhea" id="RHEA:13017"/>
        <dbReference type="ChEBI" id="CHEBI:17568"/>
        <dbReference type="ChEBI" id="CHEBI:33019"/>
        <dbReference type="ChEBI" id="CHEBI:57865"/>
        <dbReference type="ChEBI" id="CHEBI:58017"/>
        <dbReference type="EC" id="2.4.2.9"/>
    </reaction>
</comment>
<comment type="similarity">
    <text evidence="1">Belongs to the purine/pyrimidine phosphoribosyltransferase family. PyrR subfamily.</text>
</comment>
<accession>Q65UX5</accession>
<feature type="chain" id="PRO_1000053846" description="Bifunctional protein PyrR">
    <location>
        <begin position="1"/>
        <end position="179"/>
    </location>
</feature>
<feature type="short sequence motif" description="PRPP-binding" evidence="1">
    <location>
        <begin position="100"/>
        <end position="112"/>
    </location>
</feature>
<sequence length="179" mass="20252">MEKIIIDESQFMRTISRISHEIIEKHQNLNDLVIVGIKRRGAEIADLIKRKINELSGQSLPSIDLDITFYRDDLEYVEPASQSPVYSGASEFISVQNKTVILIDDVLFTGRTIRAALDALVDFGRAAKVELVIFVDRGHRELPIRADYVGKNVPTSRSEKVQVRTMKFDGCYEVALISK</sequence>
<evidence type="ECO:0000255" key="1">
    <source>
        <dbReference type="HAMAP-Rule" id="MF_01219"/>
    </source>
</evidence>
<dbReference type="EC" id="2.4.2.9" evidence="1"/>
<dbReference type="EMBL" id="AE016827">
    <property type="protein sequence ID" value="AAU37235.1"/>
    <property type="molecule type" value="Genomic_DNA"/>
</dbReference>
<dbReference type="RefSeq" id="WP_011199807.1">
    <property type="nucleotide sequence ID" value="NC_006300.1"/>
</dbReference>
<dbReference type="SMR" id="Q65UX5"/>
<dbReference type="STRING" id="221988.MS0628"/>
<dbReference type="KEGG" id="msu:MS0628"/>
<dbReference type="eggNOG" id="COG2065">
    <property type="taxonomic scope" value="Bacteria"/>
</dbReference>
<dbReference type="HOGENOM" id="CLU_094234_2_1_6"/>
<dbReference type="OrthoDB" id="9802227at2"/>
<dbReference type="Proteomes" id="UP000000607">
    <property type="component" value="Chromosome"/>
</dbReference>
<dbReference type="GO" id="GO:0004845">
    <property type="term" value="F:uracil phosphoribosyltransferase activity"/>
    <property type="evidence" value="ECO:0007669"/>
    <property type="project" value="UniProtKB-UniRule"/>
</dbReference>
<dbReference type="GO" id="GO:0006355">
    <property type="term" value="P:regulation of DNA-templated transcription"/>
    <property type="evidence" value="ECO:0007669"/>
    <property type="project" value="UniProtKB-UniRule"/>
</dbReference>
<dbReference type="CDD" id="cd06223">
    <property type="entry name" value="PRTases_typeI"/>
    <property type="match status" value="1"/>
</dbReference>
<dbReference type="FunFam" id="3.40.50.2020:FF:000020">
    <property type="entry name" value="Bifunctional protein PyrR"/>
    <property type="match status" value="1"/>
</dbReference>
<dbReference type="Gene3D" id="3.40.50.2020">
    <property type="match status" value="1"/>
</dbReference>
<dbReference type="HAMAP" id="MF_01219">
    <property type="entry name" value="PyrR"/>
    <property type="match status" value="1"/>
</dbReference>
<dbReference type="InterPro" id="IPR000836">
    <property type="entry name" value="PRibTrfase_dom"/>
</dbReference>
<dbReference type="InterPro" id="IPR029057">
    <property type="entry name" value="PRTase-like"/>
</dbReference>
<dbReference type="InterPro" id="IPR023050">
    <property type="entry name" value="PyrR"/>
</dbReference>
<dbReference type="InterPro" id="IPR050137">
    <property type="entry name" value="PyrR_bifunctional"/>
</dbReference>
<dbReference type="NCBIfam" id="NF003549">
    <property type="entry name" value="PRK05205.1-5"/>
    <property type="match status" value="1"/>
</dbReference>
<dbReference type="PANTHER" id="PTHR11608">
    <property type="entry name" value="BIFUNCTIONAL PROTEIN PYRR"/>
    <property type="match status" value="1"/>
</dbReference>
<dbReference type="PANTHER" id="PTHR11608:SF0">
    <property type="entry name" value="BIFUNCTIONAL PROTEIN PYRR"/>
    <property type="match status" value="1"/>
</dbReference>
<dbReference type="Pfam" id="PF00156">
    <property type="entry name" value="Pribosyltran"/>
    <property type="match status" value="1"/>
</dbReference>
<dbReference type="SUPFAM" id="SSF53271">
    <property type="entry name" value="PRTase-like"/>
    <property type="match status" value="1"/>
</dbReference>
<name>PYRR_MANSM</name>
<protein>
    <recommendedName>
        <fullName evidence="1">Bifunctional protein PyrR</fullName>
    </recommendedName>
    <domain>
        <recommendedName>
            <fullName evidence="1">Pyrimidine operon regulatory protein</fullName>
        </recommendedName>
    </domain>
    <domain>
        <recommendedName>
            <fullName evidence="1">Uracil phosphoribosyltransferase</fullName>
            <shortName evidence="1">UPRTase</shortName>
            <ecNumber evidence="1">2.4.2.9</ecNumber>
        </recommendedName>
    </domain>
</protein>
<keyword id="KW-0328">Glycosyltransferase</keyword>
<keyword id="KW-0804">Transcription</keyword>
<keyword id="KW-0805">Transcription regulation</keyword>
<keyword id="KW-0808">Transferase</keyword>
<reference key="1">
    <citation type="journal article" date="2004" name="Nat. Biotechnol.">
        <title>The genome sequence of the capnophilic rumen bacterium Mannheimia succiniciproducens.</title>
        <authorList>
            <person name="Hong S.H."/>
            <person name="Kim J.S."/>
            <person name="Lee S.Y."/>
            <person name="In Y.H."/>
            <person name="Choi S.S."/>
            <person name="Rih J.-K."/>
            <person name="Kim C.H."/>
            <person name="Jeong H."/>
            <person name="Hur C.G."/>
            <person name="Kim J.J."/>
        </authorList>
    </citation>
    <scope>NUCLEOTIDE SEQUENCE [LARGE SCALE GENOMIC DNA]</scope>
    <source>
        <strain>KCTC 0769BP / MBEL55E</strain>
    </source>
</reference>
<gene>
    <name evidence="1" type="primary">pyrR</name>
    <name type="ordered locus">MS0628</name>
</gene>